<proteinExistence type="inferred from homology"/>
<keyword id="KW-0028">Amino-acid biosynthesis</keyword>
<keyword id="KW-0067">ATP-binding</keyword>
<keyword id="KW-0963">Cytoplasm</keyword>
<keyword id="KW-0368">Histidine biosynthesis</keyword>
<keyword id="KW-0378">Hydrolase</keyword>
<keyword id="KW-0511">Multifunctional enzyme</keyword>
<keyword id="KW-0547">Nucleotide-binding</keyword>
<keyword id="KW-1185">Reference proteome</keyword>
<name>HIS2_BLOFL</name>
<organism>
    <name type="scientific">Blochmanniella floridana</name>
    <dbReference type="NCBI Taxonomy" id="203907"/>
    <lineage>
        <taxon>Bacteria</taxon>
        <taxon>Pseudomonadati</taxon>
        <taxon>Pseudomonadota</taxon>
        <taxon>Gammaproteobacteria</taxon>
        <taxon>Enterobacterales</taxon>
        <taxon>Enterobacteriaceae</taxon>
        <taxon>ant endosymbionts</taxon>
        <taxon>Candidatus Blochmanniella</taxon>
    </lineage>
</organism>
<sequence length="213" mass="24176">MLTTEKYQGLNWSKNHGLIPAIIQHSISGEVLMLGYMNQESMAITEKTGYVTFFSRSKNRLWIKGESSGNVLKLINWYPDCDFDSLLILVLPQGFTCHKNTNSCFHPALTDFSFLFQLENIISIKKNHTSSHGNQQSSYTSDLYTSGIERIAQKVGEEGLETALAAVSRNSKSLIDEASDLIYHLLVLLQHESLNFHDVIQELRVRSKLKKKH</sequence>
<reference key="1">
    <citation type="journal article" date="2003" name="Proc. Natl. Acad. Sci. U.S.A.">
        <title>The genome sequence of Blochmannia floridanus: comparative analysis of reduced genomes.</title>
        <authorList>
            <person name="Gil R."/>
            <person name="Silva F.J."/>
            <person name="Zientz E."/>
            <person name="Delmotte F."/>
            <person name="Gonzalez-Candelas F."/>
            <person name="Latorre A."/>
            <person name="Rausell C."/>
            <person name="Kamerbeek J."/>
            <person name="Gadau J."/>
            <person name="Hoelldobler B."/>
            <person name="van Ham R.C.H.J."/>
            <person name="Gross R."/>
            <person name="Moya A."/>
        </authorList>
    </citation>
    <scope>NUCLEOTIDE SEQUENCE [LARGE SCALE GENOMIC DNA]</scope>
</reference>
<feature type="chain" id="PRO_0000136409" description="Histidine biosynthesis bifunctional protein HisIE">
    <location>
        <begin position="1"/>
        <end position="213"/>
    </location>
</feature>
<feature type="region of interest" description="Phosphoribosyl-AMP cyclohydrolase">
    <location>
        <begin position="1"/>
        <end position="114"/>
    </location>
</feature>
<feature type="region of interest" description="Phosphoribosyl-ATP pyrophosphohydrolase">
    <location>
        <begin position="115"/>
        <end position="213"/>
    </location>
</feature>
<accession>Q7VQW4</accession>
<evidence type="ECO:0000255" key="1">
    <source>
        <dbReference type="HAMAP-Rule" id="MF_01019"/>
    </source>
</evidence>
<dbReference type="EC" id="3.5.4.19" evidence="1"/>
<dbReference type="EC" id="3.6.1.31" evidence="1"/>
<dbReference type="EMBL" id="BX248583">
    <property type="protein sequence ID" value="CAD83528.1"/>
    <property type="molecule type" value="Genomic_DNA"/>
</dbReference>
<dbReference type="SMR" id="Q7VQW4"/>
<dbReference type="STRING" id="203907.Bfl469"/>
<dbReference type="KEGG" id="bfl:Bfl469"/>
<dbReference type="eggNOG" id="COG0139">
    <property type="taxonomic scope" value="Bacteria"/>
</dbReference>
<dbReference type="eggNOG" id="COG0140">
    <property type="taxonomic scope" value="Bacteria"/>
</dbReference>
<dbReference type="HOGENOM" id="CLU_048577_3_1_6"/>
<dbReference type="OrthoDB" id="9795769at2"/>
<dbReference type="UniPathway" id="UPA00031">
    <property type="reaction ID" value="UER00007"/>
</dbReference>
<dbReference type="UniPathway" id="UPA00031">
    <property type="reaction ID" value="UER00008"/>
</dbReference>
<dbReference type="Proteomes" id="UP000002192">
    <property type="component" value="Chromosome"/>
</dbReference>
<dbReference type="GO" id="GO:0005737">
    <property type="term" value="C:cytoplasm"/>
    <property type="evidence" value="ECO:0007669"/>
    <property type="project" value="UniProtKB-SubCell"/>
</dbReference>
<dbReference type="GO" id="GO:0005524">
    <property type="term" value="F:ATP binding"/>
    <property type="evidence" value="ECO:0007669"/>
    <property type="project" value="UniProtKB-KW"/>
</dbReference>
<dbReference type="GO" id="GO:0004635">
    <property type="term" value="F:phosphoribosyl-AMP cyclohydrolase activity"/>
    <property type="evidence" value="ECO:0007669"/>
    <property type="project" value="UniProtKB-UniRule"/>
</dbReference>
<dbReference type="GO" id="GO:0004636">
    <property type="term" value="F:phosphoribosyl-ATP diphosphatase activity"/>
    <property type="evidence" value="ECO:0007669"/>
    <property type="project" value="UniProtKB-UniRule"/>
</dbReference>
<dbReference type="GO" id="GO:0000105">
    <property type="term" value="P:L-histidine biosynthetic process"/>
    <property type="evidence" value="ECO:0007669"/>
    <property type="project" value="UniProtKB-UniRule"/>
</dbReference>
<dbReference type="CDD" id="cd11534">
    <property type="entry name" value="NTP-PPase_HisIE_like"/>
    <property type="match status" value="1"/>
</dbReference>
<dbReference type="FunFam" id="3.10.20.810:FF:000001">
    <property type="entry name" value="Histidine biosynthesis bifunctional protein HisIE"/>
    <property type="match status" value="1"/>
</dbReference>
<dbReference type="Gene3D" id="1.10.287.1080">
    <property type="entry name" value="MazG-like"/>
    <property type="match status" value="1"/>
</dbReference>
<dbReference type="Gene3D" id="3.10.20.810">
    <property type="entry name" value="Phosphoribosyl-AMP cyclohydrolase"/>
    <property type="match status" value="1"/>
</dbReference>
<dbReference type="HAMAP" id="MF_01020">
    <property type="entry name" value="HisE"/>
    <property type="match status" value="1"/>
</dbReference>
<dbReference type="HAMAP" id="MF_01019">
    <property type="entry name" value="HisIE"/>
    <property type="match status" value="1"/>
</dbReference>
<dbReference type="InterPro" id="IPR023019">
    <property type="entry name" value="His_synth_HisIE"/>
</dbReference>
<dbReference type="InterPro" id="IPR008179">
    <property type="entry name" value="HisE"/>
</dbReference>
<dbReference type="InterPro" id="IPR021130">
    <property type="entry name" value="PRib-ATP_PPHydrolase-like"/>
</dbReference>
<dbReference type="InterPro" id="IPR002496">
    <property type="entry name" value="PRib_AMP_CycHydrolase_dom"/>
</dbReference>
<dbReference type="InterPro" id="IPR038019">
    <property type="entry name" value="PRib_AMP_CycHydrolase_sf"/>
</dbReference>
<dbReference type="NCBIfam" id="TIGR03188">
    <property type="entry name" value="histidine_hisI"/>
    <property type="match status" value="1"/>
</dbReference>
<dbReference type="NCBIfam" id="NF002747">
    <property type="entry name" value="PRK02759.1"/>
    <property type="match status" value="1"/>
</dbReference>
<dbReference type="PANTHER" id="PTHR42945">
    <property type="entry name" value="HISTIDINE BIOSYNTHESIS BIFUNCTIONAL PROTEIN"/>
    <property type="match status" value="1"/>
</dbReference>
<dbReference type="PANTHER" id="PTHR42945:SF9">
    <property type="entry name" value="HISTIDINE BIOSYNTHESIS BIFUNCTIONAL PROTEIN HISIE"/>
    <property type="match status" value="1"/>
</dbReference>
<dbReference type="Pfam" id="PF01502">
    <property type="entry name" value="PRA-CH"/>
    <property type="match status" value="1"/>
</dbReference>
<dbReference type="Pfam" id="PF01503">
    <property type="entry name" value="PRA-PH"/>
    <property type="match status" value="1"/>
</dbReference>
<dbReference type="SUPFAM" id="SSF101386">
    <property type="entry name" value="all-alpha NTP pyrophosphatases"/>
    <property type="match status" value="1"/>
</dbReference>
<dbReference type="SUPFAM" id="SSF141734">
    <property type="entry name" value="HisI-like"/>
    <property type="match status" value="1"/>
</dbReference>
<gene>
    <name evidence="1" type="primary">hisI</name>
    <name evidence="1" type="synonym">hisIE</name>
    <name type="ordered locus">Bfl469</name>
</gene>
<protein>
    <recommendedName>
        <fullName evidence="1">Histidine biosynthesis bifunctional protein HisIE</fullName>
    </recommendedName>
    <domain>
        <recommendedName>
            <fullName evidence="1">Phosphoribosyl-AMP cyclohydrolase</fullName>
            <shortName evidence="1">PRA-CH</shortName>
            <ecNumber evidence="1">3.5.4.19</ecNumber>
        </recommendedName>
    </domain>
    <domain>
        <recommendedName>
            <fullName evidence="1">Phosphoribosyl-ATP pyrophosphatase</fullName>
            <shortName evidence="1">PRA-PH</shortName>
            <ecNumber evidence="1">3.6.1.31</ecNumber>
        </recommendedName>
    </domain>
</protein>
<comment type="catalytic activity">
    <reaction evidence="1">
        <text>1-(5-phospho-beta-D-ribosyl)-ATP + H2O = 1-(5-phospho-beta-D-ribosyl)-5'-AMP + diphosphate + H(+)</text>
        <dbReference type="Rhea" id="RHEA:22828"/>
        <dbReference type="ChEBI" id="CHEBI:15377"/>
        <dbReference type="ChEBI" id="CHEBI:15378"/>
        <dbReference type="ChEBI" id="CHEBI:33019"/>
        <dbReference type="ChEBI" id="CHEBI:59457"/>
        <dbReference type="ChEBI" id="CHEBI:73183"/>
        <dbReference type="EC" id="3.6.1.31"/>
    </reaction>
</comment>
<comment type="catalytic activity">
    <reaction evidence="1">
        <text>1-(5-phospho-beta-D-ribosyl)-5'-AMP + H2O = 1-(5-phospho-beta-D-ribosyl)-5-[(5-phospho-beta-D-ribosylamino)methylideneamino]imidazole-4-carboxamide</text>
        <dbReference type="Rhea" id="RHEA:20049"/>
        <dbReference type="ChEBI" id="CHEBI:15377"/>
        <dbReference type="ChEBI" id="CHEBI:58435"/>
        <dbReference type="ChEBI" id="CHEBI:59457"/>
        <dbReference type="EC" id="3.5.4.19"/>
    </reaction>
</comment>
<comment type="pathway">
    <text evidence="1">Amino-acid biosynthesis; L-histidine biosynthesis; L-histidine from 5-phospho-alpha-D-ribose 1-diphosphate: step 2/9.</text>
</comment>
<comment type="pathway">
    <text evidence="1">Amino-acid biosynthesis; L-histidine biosynthesis; L-histidine from 5-phospho-alpha-D-ribose 1-diphosphate: step 3/9.</text>
</comment>
<comment type="subcellular location">
    <subcellularLocation>
        <location evidence="1">Cytoplasm</location>
    </subcellularLocation>
</comment>
<comment type="similarity">
    <text evidence="1">In the N-terminal section; belongs to the PRA-CH family.</text>
</comment>
<comment type="similarity">
    <text evidence="1">In the C-terminal section; belongs to the PRA-PH family.</text>
</comment>